<proteinExistence type="inferred from homology"/>
<evidence type="ECO:0000255" key="1">
    <source>
        <dbReference type="HAMAP-Rule" id="MF_00333"/>
    </source>
</evidence>
<feature type="chain" id="PRO_1000119806" description="Oxygen-dependent coproporphyrinogen-III oxidase">
    <location>
        <begin position="1"/>
        <end position="304"/>
    </location>
</feature>
<feature type="region of interest" description="Important for dimerization" evidence="1">
    <location>
        <begin position="269"/>
        <end position="304"/>
    </location>
</feature>
<feature type="active site" description="Proton donor" evidence="1">
    <location>
        <position position="131"/>
    </location>
</feature>
<feature type="binding site" evidence="1">
    <location>
        <position position="117"/>
    </location>
    <ligand>
        <name>substrate</name>
    </ligand>
</feature>
<feature type="binding site" evidence="1">
    <location>
        <position position="121"/>
    </location>
    <ligand>
        <name>a divalent metal cation</name>
        <dbReference type="ChEBI" id="CHEBI:60240"/>
    </ligand>
</feature>
<feature type="binding site" evidence="1">
    <location>
        <position position="131"/>
    </location>
    <ligand>
        <name>a divalent metal cation</name>
        <dbReference type="ChEBI" id="CHEBI:60240"/>
    </ligand>
</feature>
<feature type="binding site" evidence="1">
    <location>
        <begin position="133"/>
        <end position="135"/>
    </location>
    <ligand>
        <name>substrate</name>
    </ligand>
</feature>
<feature type="binding site" evidence="1">
    <location>
        <position position="169"/>
    </location>
    <ligand>
        <name>a divalent metal cation</name>
        <dbReference type="ChEBI" id="CHEBI:60240"/>
    </ligand>
</feature>
<feature type="binding site" evidence="1">
    <location>
        <position position="200"/>
    </location>
    <ligand>
        <name>a divalent metal cation</name>
        <dbReference type="ChEBI" id="CHEBI:60240"/>
    </ligand>
</feature>
<feature type="binding site" evidence="1">
    <location>
        <begin position="287"/>
        <end position="289"/>
    </location>
    <ligand>
        <name>substrate</name>
    </ligand>
</feature>
<feature type="site" description="Important for dimerization" evidence="1">
    <location>
        <position position="200"/>
    </location>
</feature>
<name>HEM6_CHESB</name>
<accession>Q11GB4</accession>
<sequence length="304" mass="34672">MEQPHIPAGLPEDVENKKEAARAWFETLRDKICAALEGLEDELSGPHSSYAPGRFEQTPWLRQEGAGGGGVMSIMHGRVFEKVGVHTSTVHGEFSPEFRRQIPGAEEDPRFWASGISVIAHPQNPHVPTVHMNTRMVVTTRQWFGGGADLTPMLNRRRSQEDPDAIAFHKAMRFVCERHAAVADYEKFKNWCEEYFFLPHRNEPRGIGGIFYDWLKSPEENGGWDADFAFTQDVGRAFVMVYQHIVRKNFNTNWTEADREEQLIRRGRYVEFNLLYDRGTIFGLKTGGNVNSILSSLPPVVKWP</sequence>
<keyword id="KW-0963">Cytoplasm</keyword>
<keyword id="KW-0350">Heme biosynthesis</keyword>
<keyword id="KW-0479">Metal-binding</keyword>
<keyword id="KW-0560">Oxidoreductase</keyword>
<keyword id="KW-0627">Porphyrin biosynthesis</keyword>
<dbReference type="EC" id="1.3.3.3" evidence="1"/>
<dbReference type="EMBL" id="CP000390">
    <property type="protein sequence ID" value="ABG63561.1"/>
    <property type="molecule type" value="Genomic_DNA"/>
</dbReference>
<dbReference type="SMR" id="Q11GB4"/>
<dbReference type="STRING" id="266779.Meso_2169"/>
<dbReference type="KEGG" id="mes:Meso_2169"/>
<dbReference type="eggNOG" id="COG0408">
    <property type="taxonomic scope" value="Bacteria"/>
</dbReference>
<dbReference type="HOGENOM" id="CLU_026169_0_1_5"/>
<dbReference type="OrthoDB" id="9777553at2"/>
<dbReference type="UniPathway" id="UPA00251">
    <property type="reaction ID" value="UER00322"/>
</dbReference>
<dbReference type="GO" id="GO:0005737">
    <property type="term" value="C:cytoplasm"/>
    <property type="evidence" value="ECO:0007669"/>
    <property type="project" value="UniProtKB-SubCell"/>
</dbReference>
<dbReference type="GO" id="GO:0004109">
    <property type="term" value="F:coproporphyrinogen oxidase activity"/>
    <property type="evidence" value="ECO:0007669"/>
    <property type="project" value="UniProtKB-UniRule"/>
</dbReference>
<dbReference type="GO" id="GO:0046872">
    <property type="term" value="F:metal ion binding"/>
    <property type="evidence" value="ECO:0007669"/>
    <property type="project" value="UniProtKB-KW"/>
</dbReference>
<dbReference type="GO" id="GO:0042803">
    <property type="term" value="F:protein homodimerization activity"/>
    <property type="evidence" value="ECO:0000250"/>
    <property type="project" value="UniProtKB"/>
</dbReference>
<dbReference type="GO" id="GO:0006782">
    <property type="term" value="P:protoporphyrinogen IX biosynthetic process"/>
    <property type="evidence" value="ECO:0007669"/>
    <property type="project" value="UniProtKB-UniRule"/>
</dbReference>
<dbReference type="FunFam" id="3.40.1500.10:FF:000005">
    <property type="entry name" value="Oxygen-dependent coproporphyrinogen-III oxidase"/>
    <property type="match status" value="1"/>
</dbReference>
<dbReference type="Gene3D" id="3.40.1500.10">
    <property type="entry name" value="Coproporphyrinogen III oxidase, aerobic"/>
    <property type="match status" value="1"/>
</dbReference>
<dbReference type="HAMAP" id="MF_00333">
    <property type="entry name" value="Coprogen_oxidas"/>
    <property type="match status" value="1"/>
</dbReference>
<dbReference type="InterPro" id="IPR001260">
    <property type="entry name" value="Coprogen_oxidase_aer"/>
</dbReference>
<dbReference type="InterPro" id="IPR036406">
    <property type="entry name" value="Coprogen_oxidase_aer_sf"/>
</dbReference>
<dbReference type="InterPro" id="IPR018375">
    <property type="entry name" value="Coprogen_oxidase_CS"/>
</dbReference>
<dbReference type="NCBIfam" id="NF003727">
    <property type="entry name" value="PRK05330.1"/>
    <property type="match status" value="1"/>
</dbReference>
<dbReference type="PANTHER" id="PTHR10755">
    <property type="entry name" value="COPROPORPHYRINOGEN III OXIDASE, MITOCHONDRIAL"/>
    <property type="match status" value="1"/>
</dbReference>
<dbReference type="PANTHER" id="PTHR10755:SF0">
    <property type="entry name" value="OXYGEN-DEPENDENT COPROPORPHYRINOGEN-III OXIDASE, MITOCHONDRIAL"/>
    <property type="match status" value="1"/>
</dbReference>
<dbReference type="Pfam" id="PF01218">
    <property type="entry name" value="Coprogen_oxidas"/>
    <property type="match status" value="1"/>
</dbReference>
<dbReference type="PIRSF" id="PIRSF000166">
    <property type="entry name" value="Coproporphyri_ox"/>
    <property type="match status" value="1"/>
</dbReference>
<dbReference type="PRINTS" id="PR00073">
    <property type="entry name" value="COPRGNOXDASE"/>
</dbReference>
<dbReference type="SUPFAM" id="SSF102886">
    <property type="entry name" value="Coproporphyrinogen III oxidase"/>
    <property type="match status" value="1"/>
</dbReference>
<dbReference type="PROSITE" id="PS01021">
    <property type="entry name" value="COPROGEN_OXIDASE"/>
    <property type="match status" value="1"/>
</dbReference>
<gene>
    <name evidence="1" type="primary">hemF</name>
    <name type="ordered locus">Meso_2169</name>
</gene>
<protein>
    <recommendedName>
        <fullName evidence="1">Oxygen-dependent coproporphyrinogen-III oxidase</fullName>
        <shortName evidence="1">CPO</shortName>
        <shortName evidence="1">Coprogen oxidase</shortName>
        <shortName evidence="1">Coproporphyrinogenase</shortName>
        <ecNumber evidence="1">1.3.3.3</ecNumber>
    </recommendedName>
</protein>
<comment type="function">
    <text evidence="1">Involved in the heme biosynthesis. Catalyzes the aerobic oxidative decarboxylation of propionate groups of rings A and B of coproporphyrinogen-III to yield the vinyl groups in protoporphyrinogen-IX.</text>
</comment>
<comment type="catalytic activity">
    <reaction evidence="1">
        <text>coproporphyrinogen III + O2 + 2 H(+) = protoporphyrinogen IX + 2 CO2 + 2 H2O</text>
        <dbReference type="Rhea" id="RHEA:18257"/>
        <dbReference type="ChEBI" id="CHEBI:15377"/>
        <dbReference type="ChEBI" id="CHEBI:15378"/>
        <dbReference type="ChEBI" id="CHEBI:15379"/>
        <dbReference type="ChEBI" id="CHEBI:16526"/>
        <dbReference type="ChEBI" id="CHEBI:57307"/>
        <dbReference type="ChEBI" id="CHEBI:57309"/>
        <dbReference type="EC" id="1.3.3.3"/>
    </reaction>
</comment>
<comment type="cofactor">
    <cofactor evidence="1">
        <name>a divalent metal cation</name>
        <dbReference type="ChEBI" id="CHEBI:60240"/>
    </cofactor>
</comment>
<comment type="pathway">
    <text evidence="1">Porphyrin-containing compound metabolism; protoporphyrin-IX biosynthesis; protoporphyrinogen-IX from coproporphyrinogen-III (O2 route): step 1/1.</text>
</comment>
<comment type="subunit">
    <text evidence="1">Homodimer.</text>
</comment>
<comment type="subcellular location">
    <subcellularLocation>
        <location evidence="1">Cytoplasm</location>
    </subcellularLocation>
</comment>
<comment type="similarity">
    <text evidence="1">Belongs to the aerobic coproporphyrinogen-III oxidase family.</text>
</comment>
<reference key="1">
    <citation type="submission" date="2006-06" db="EMBL/GenBank/DDBJ databases">
        <title>Complete sequence of chromosome of Mesorhizobium sp. BNC1.</title>
        <authorList>
            <consortium name="US DOE Joint Genome Institute"/>
            <person name="Copeland A."/>
            <person name="Lucas S."/>
            <person name="Lapidus A."/>
            <person name="Barry K."/>
            <person name="Detter J.C."/>
            <person name="Glavina del Rio T."/>
            <person name="Hammon N."/>
            <person name="Israni S."/>
            <person name="Dalin E."/>
            <person name="Tice H."/>
            <person name="Pitluck S."/>
            <person name="Chertkov O."/>
            <person name="Brettin T."/>
            <person name="Bruce D."/>
            <person name="Han C."/>
            <person name="Tapia R."/>
            <person name="Gilna P."/>
            <person name="Schmutz J."/>
            <person name="Larimer F."/>
            <person name="Land M."/>
            <person name="Hauser L."/>
            <person name="Kyrpides N."/>
            <person name="Mikhailova N."/>
            <person name="Richardson P."/>
        </authorList>
    </citation>
    <scope>NUCLEOTIDE SEQUENCE [LARGE SCALE GENOMIC DNA]</scope>
    <source>
        <strain>BNC1</strain>
    </source>
</reference>
<organism>
    <name type="scientific">Chelativorans sp. (strain BNC1)</name>
    <dbReference type="NCBI Taxonomy" id="266779"/>
    <lineage>
        <taxon>Bacteria</taxon>
        <taxon>Pseudomonadati</taxon>
        <taxon>Pseudomonadota</taxon>
        <taxon>Alphaproteobacteria</taxon>
        <taxon>Hyphomicrobiales</taxon>
        <taxon>Phyllobacteriaceae</taxon>
        <taxon>Chelativorans</taxon>
    </lineage>
</organism>